<name>YGR8_SCHPO</name>
<comment type="subcellular location">
    <subcellularLocation>
        <location evidence="2">Endoplasmic reticulum membrane</location>
        <topology evidence="2">Multi-pass membrane protein</topology>
    </subcellularLocation>
</comment>
<comment type="similarity">
    <text evidence="3">Belongs to the derlin family.</text>
</comment>
<sequence>MASEFSGQIQELLSRIPPVTRYILLGTAATTILTLCQLLSPSMLVLHYPLVVRQKQWYRLFTNYLYAGTGFDFIMNIYFFYQYSTYLENFVFARNAKKYIIYLVKVALLIDAFSLISGLGSALNQSLAAAIAYNWSLFNSFSKIQFLFGFHVQGKYLPYVLLGFSFLTGGLPSLVVLGFGIISAMIVNFFDSIHTPVVHRSNSPKLNSQKVSGTFIGKGKKLGT</sequence>
<dbReference type="EMBL" id="CU329671">
    <property type="protein sequence ID" value="CAB44760.1"/>
    <property type="molecule type" value="Genomic_DNA"/>
</dbReference>
<dbReference type="PIR" id="T40315">
    <property type="entry name" value="T40315"/>
</dbReference>
<dbReference type="SMR" id="Q9Y7Y0"/>
<dbReference type="BioGRID" id="277587">
    <property type="interactions" value="3"/>
</dbReference>
<dbReference type="FunCoup" id="Q9Y7Y0">
    <property type="interactions" value="10"/>
</dbReference>
<dbReference type="STRING" id="284812.Q9Y7Y0"/>
<dbReference type="iPTMnet" id="Q9Y7Y0"/>
<dbReference type="PaxDb" id="4896-SPBC365.08c.1"/>
<dbReference type="EnsemblFungi" id="SPBC365.08c.1">
    <property type="protein sequence ID" value="SPBC365.08c.1:pep"/>
    <property type="gene ID" value="SPBC365.08c"/>
</dbReference>
<dbReference type="KEGG" id="spo:2541072"/>
<dbReference type="PomBase" id="SPBC365.08c"/>
<dbReference type="VEuPathDB" id="FungiDB:SPBC365.08c"/>
<dbReference type="eggNOG" id="KOG0858">
    <property type="taxonomic scope" value="Eukaryota"/>
</dbReference>
<dbReference type="HOGENOM" id="CLU_1210403_0_0_1"/>
<dbReference type="InParanoid" id="Q9Y7Y0"/>
<dbReference type="OMA" id="SSPAEWY"/>
<dbReference type="PhylomeDB" id="Q9Y7Y0"/>
<dbReference type="Reactome" id="R-SPO-5358346">
    <property type="pathway name" value="Hedgehog ligand biogenesis"/>
</dbReference>
<dbReference type="PRO" id="PR:Q9Y7Y0"/>
<dbReference type="Proteomes" id="UP000002485">
    <property type="component" value="Chromosome II"/>
</dbReference>
<dbReference type="GO" id="GO:0005783">
    <property type="term" value="C:endoplasmic reticulum"/>
    <property type="evidence" value="ECO:0007005"/>
    <property type="project" value="PomBase"/>
</dbReference>
<dbReference type="GO" id="GO:0005789">
    <property type="term" value="C:endoplasmic reticulum membrane"/>
    <property type="evidence" value="ECO:0000318"/>
    <property type="project" value="GO_Central"/>
</dbReference>
<dbReference type="GO" id="GO:0000836">
    <property type="term" value="C:Hrd1p ubiquitin ligase complex"/>
    <property type="evidence" value="ECO:0000266"/>
    <property type="project" value="PomBase"/>
</dbReference>
<dbReference type="GO" id="GO:0005047">
    <property type="term" value="F:signal recognition particle binding"/>
    <property type="evidence" value="ECO:0000318"/>
    <property type="project" value="GO_Central"/>
</dbReference>
<dbReference type="GO" id="GO:0030968">
    <property type="term" value="P:endoplasmic reticulum unfolded protein response"/>
    <property type="evidence" value="ECO:0000318"/>
    <property type="project" value="GO_Central"/>
</dbReference>
<dbReference type="GO" id="GO:0036503">
    <property type="term" value="P:ERAD pathway"/>
    <property type="evidence" value="ECO:0000318"/>
    <property type="project" value="GO_Central"/>
</dbReference>
<dbReference type="InterPro" id="IPR007599">
    <property type="entry name" value="DER1"/>
</dbReference>
<dbReference type="InterPro" id="IPR035952">
    <property type="entry name" value="Rhomboid-like_sf"/>
</dbReference>
<dbReference type="PANTHER" id="PTHR11009">
    <property type="entry name" value="DER1-LIKE PROTEIN, DERLIN"/>
    <property type="match status" value="1"/>
</dbReference>
<dbReference type="Pfam" id="PF04511">
    <property type="entry name" value="DER1"/>
    <property type="match status" value="1"/>
</dbReference>
<dbReference type="SUPFAM" id="SSF144091">
    <property type="entry name" value="Rhomboid-like"/>
    <property type="match status" value="1"/>
</dbReference>
<reference key="1">
    <citation type="journal article" date="2002" name="Nature">
        <title>The genome sequence of Schizosaccharomyces pombe.</title>
        <authorList>
            <person name="Wood V."/>
            <person name="Gwilliam R."/>
            <person name="Rajandream M.A."/>
            <person name="Lyne M.H."/>
            <person name="Lyne R."/>
            <person name="Stewart A."/>
            <person name="Sgouros J.G."/>
            <person name="Peat N."/>
            <person name="Hayles J."/>
            <person name="Baker S.G."/>
            <person name="Basham D."/>
            <person name="Bowman S."/>
            <person name="Brooks K."/>
            <person name="Brown D."/>
            <person name="Brown S."/>
            <person name="Chillingworth T."/>
            <person name="Churcher C.M."/>
            <person name="Collins M."/>
            <person name="Connor R."/>
            <person name="Cronin A."/>
            <person name="Davis P."/>
            <person name="Feltwell T."/>
            <person name="Fraser A."/>
            <person name="Gentles S."/>
            <person name="Goble A."/>
            <person name="Hamlin N."/>
            <person name="Harris D.E."/>
            <person name="Hidalgo J."/>
            <person name="Hodgson G."/>
            <person name="Holroyd S."/>
            <person name="Hornsby T."/>
            <person name="Howarth S."/>
            <person name="Huckle E.J."/>
            <person name="Hunt S."/>
            <person name="Jagels K."/>
            <person name="James K.D."/>
            <person name="Jones L."/>
            <person name="Jones M."/>
            <person name="Leather S."/>
            <person name="McDonald S."/>
            <person name="McLean J."/>
            <person name="Mooney P."/>
            <person name="Moule S."/>
            <person name="Mungall K.L."/>
            <person name="Murphy L.D."/>
            <person name="Niblett D."/>
            <person name="Odell C."/>
            <person name="Oliver K."/>
            <person name="O'Neil S."/>
            <person name="Pearson D."/>
            <person name="Quail M.A."/>
            <person name="Rabbinowitsch E."/>
            <person name="Rutherford K.M."/>
            <person name="Rutter S."/>
            <person name="Saunders D."/>
            <person name="Seeger K."/>
            <person name="Sharp S."/>
            <person name="Skelton J."/>
            <person name="Simmonds M.N."/>
            <person name="Squares R."/>
            <person name="Squares S."/>
            <person name="Stevens K."/>
            <person name="Taylor K."/>
            <person name="Taylor R.G."/>
            <person name="Tivey A."/>
            <person name="Walsh S.V."/>
            <person name="Warren T."/>
            <person name="Whitehead S."/>
            <person name="Woodward J.R."/>
            <person name="Volckaert G."/>
            <person name="Aert R."/>
            <person name="Robben J."/>
            <person name="Grymonprez B."/>
            <person name="Weltjens I."/>
            <person name="Vanstreels E."/>
            <person name="Rieger M."/>
            <person name="Schaefer M."/>
            <person name="Mueller-Auer S."/>
            <person name="Gabel C."/>
            <person name="Fuchs M."/>
            <person name="Duesterhoeft A."/>
            <person name="Fritzc C."/>
            <person name="Holzer E."/>
            <person name="Moestl D."/>
            <person name="Hilbert H."/>
            <person name="Borzym K."/>
            <person name="Langer I."/>
            <person name="Beck A."/>
            <person name="Lehrach H."/>
            <person name="Reinhardt R."/>
            <person name="Pohl T.M."/>
            <person name="Eger P."/>
            <person name="Zimmermann W."/>
            <person name="Wedler H."/>
            <person name="Wambutt R."/>
            <person name="Purnelle B."/>
            <person name="Goffeau A."/>
            <person name="Cadieu E."/>
            <person name="Dreano S."/>
            <person name="Gloux S."/>
            <person name="Lelaure V."/>
            <person name="Mottier S."/>
            <person name="Galibert F."/>
            <person name="Aves S.J."/>
            <person name="Xiang Z."/>
            <person name="Hunt C."/>
            <person name="Moore K."/>
            <person name="Hurst S.M."/>
            <person name="Lucas M."/>
            <person name="Rochet M."/>
            <person name="Gaillardin C."/>
            <person name="Tallada V.A."/>
            <person name="Garzon A."/>
            <person name="Thode G."/>
            <person name="Daga R.R."/>
            <person name="Cruzado L."/>
            <person name="Jimenez J."/>
            <person name="Sanchez M."/>
            <person name="del Rey F."/>
            <person name="Benito J."/>
            <person name="Dominguez A."/>
            <person name="Revuelta J.L."/>
            <person name="Moreno S."/>
            <person name="Armstrong J."/>
            <person name="Forsburg S.L."/>
            <person name="Cerutti L."/>
            <person name="Lowe T."/>
            <person name="McCombie W.R."/>
            <person name="Paulsen I."/>
            <person name="Potashkin J."/>
            <person name="Shpakovski G.V."/>
            <person name="Ussery D."/>
            <person name="Barrell B.G."/>
            <person name="Nurse P."/>
        </authorList>
    </citation>
    <scope>NUCLEOTIDE SEQUENCE [LARGE SCALE GENOMIC DNA]</scope>
    <source>
        <strain>972 / ATCC 24843</strain>
    </source>
</reference>
<reference key="2">
    <citation type="journal article" date="2006" name="Nat. Biotechnol.">
        <title>ORFeome cloning and global analysis of protein localization in the fission yeast Schizosaccharomyces pombe.</title>
        <authorList>
            <person name="Matsuyama A."/>
            <person name="Arai R."/>
            <person name="Yashiroda Y."/>
            <person name="Shirai A."/>
            <person name="Kamata A."/>
            <person name="Sekido S."/>
            <person name="Kobayashi Y."/>
            <person name="Hashimoto A."/>
            <person name="Hamamoto M."/>
            <person name="Hiraoka Y."/>
            <person name="Horinouchi S."/>
            <person name="Yoshida M."/>
        </authorList>
    </citation>
    <scope>SUBCELLULAR LOCATION [LARGE SCALE ANALYSIS]</scope>
</reference>
<gene>
    <name type="ORF">SPBC365.08c</name>
</gene>
<feature type="chain" id="PRO_0000351084" description="Uncharacterized derlin-like protein C365.08c">
    <location>
        <begin position="1"/>
        <end position="224"/>
    </location>
</feature>
<feature type="transmembrane region" description="Helical" evidence="1">
    <location>
        <begin position="32"/>
        <end position="52"/>
    </location>
</feature>
<feature type="transmembrane region" description="Helical" evidence="1">
    <location>
        <begin position="60"/>
        <end position="80"/>
    </location>
</feature>
<feature type="transmembrane region" description="Helical" evidence="1">
    <location>
        <begin position="100"/>
        <end position="120"/>
    </location>
</feature>
<feature type="transmembrane region" description="Helical" evidence="1">
    <location>
        <begin position="130"/>
        <end position="150"/>
    </location>
</feature>
<feature type="transmembrane region" description="Helical" evidence="1">
    <location>
        <begin position="162"/>
        <end position="182"/>
    </location>
</feature>
<accession>Q9Y7Y0</accession>
<evidence type="ECO:0000255" key="1"/>
<evidence type="ECO:0000269" key="2">
    <source>
    </source>
</evidence>
<evidence type="ECO:0000305" key="3"/>
<protein>
    <recommendedName>
        <fullName>Uncharacterized derlin-like protein C365.08c</fullName>
    </recommendedName>
</protein>
<organism>
    <name type="scientific">Schizosaccharomyces pombe (strain 972 / ATCC 24843)</name>
    <name type="common">Fission yeast</name>
    <dbReference type="NCBI Taxonomy" id="284812"/>
    <lineage>
        <taxon>Eukaryota</taxon>
        <taxon>Fungi</taxon>
        <taxon>Dikarya</taxon>
        <taxon>Ascomycota</taxon>
        <taxon>Taphrinomycotina</taxon>
        <taxon>Schizosaccharomycetes</taxon>
        <taxon>Schizosaccharomycetales</taxon>
        <taxon>Schizosaccharomycetaceae</taxon>
        <taxon>Schizosaccharomyces</taxon>
    </lineage>
</organism>
<keyword id="KW-0256">Endoplasmic reticulum</keyword>
<keyword id="KW-0472">Membrane</keyword>
<keyword id="KW-1185">Reference proteome</keyword>
<keyword id="KW-0812">Transmembrane</keyword>
<keyword id="KW-1133">Transmembrane helix</keyword>
<proteinExistence type="inferred from homology"/>